<gene>
    <name evidence="1" type="primary">engB</name>
    <name type="ordered locus">BURPS1106A_3773</name>
</gene>
<comment type="function">
    <text evidence="1">Necessary for normal cell division and for the maintenance of normal septation.</text>
</comment>
<comment type="cofactor">
    <cofactor evidence="1">
        <name>Mg(2+)</name>
        <dbReference type="ChEBI" id="CHEBI:18420"/>
    </cofactor>
</comment>
<comment type="similarity">
    <text evidence="1">Belongs to the TRAFAC class TrmE-Era-EngA-EngB-Septin-like GTPase superfamily. EngB GTPase family.</text>
</comment>
<organism>
    <name type="scientific">Burkholderia pseudomallei (strain 1106a)</name>
    <dbReference type="NCBI Taxonomy" id="357348"/>
    <lineage>
        <taxon>Bacteria</taxon>
        <taxon>Pseudomonadati</taxon>
        <taxon>Pseudomonadota</taxon>
        <taxon>Betaproteobacteria</taxon>
        <taxon>Burkholderiales</taxon>
        <taxon>Burkholderiaceae</taxon>
        <taxon>Burkholderia</taxon>
        <taxon>pseudomallei group</taxon>
    </lineage>
</organism>
<protein>
    <recommendedName>
        <fullName evidence="1">Probable GTP-binding protein EngB</fullName>
    </recommendedName>
</protein>
<proteinExistence type="inferred from homology"/>
<keyword id="KW-0131">Cell cycle</keyword>
<keyword id="KW-0132">Cell division</keyword>
<keyword id="KW-0342">GTP-binding</keyword>
<keyword id="KW-0460">Magnesium</keyword>
<keyword id="KW-0479">Metal-binding</keyword>
<keyword id="KW-0547">Nucleotide-binding</keyword>
<keyword id="KW-0717">Septation</keyword>
<feature type="chain" id="PRO_1000005804" description="Probable GTP-binding protein EngB">
    <location>
        <begin position="1"/>
        <end position="219"/>
    </location>
</feature>
<feature type="domain" description="EngB-type G" evidence="1">
    <location>
        <begin position="24"/>
        <end position="207"/>
    </location>
</feature>
<feature type="binding site" evidence="1">
    <location>
        <begin position="32"/>
        <end position="39"/>
    </location>
    <ligand>
        <name>GTP</name>
        <dbReference type="ChEBI" id="CHEBI:37565"/>
    </ligand>
</feature>
<feature type="binding site" evidence="1">
    <location>
        <position position="39"/>
    </location>
    <ligand>
        <name>Mg(2+)</name>
        <dbReference type="ChEBI" id="CHEBI:18420"/>
    </ligand>
</feature>
<feature type="binding site" evidence="1">
    <location>
        <begin position="59"/>
        <end position="63"/>
    </location>
    <ligand>
        <name>GTP</name>
        <dbReference type="ChEBI" id="CHEBI:37565"/>
    </ligand>
</feature>
<feature type="binding site" evidence="1">
    <location>
        <position position="61"/>
    </location>
    <ligand>
        <name>Mg(2+)</name>
        <dbReference type="ChEBI" id="CHEBI:18420"/>
    </ligand>
</feature>
<feature type="binding site" evidence="1">
    <location>
        <begin position="81"/>
        <end position="84"/>
    </location>
    <ligand>
        <name>GTP</name>
        <dbReference type="ChEBI" id="CHEBI:37565"/>
    </ligand>
</feature>
<feature type="binding site" evidence="1">
    <location>
        <begin position="148"/>
        <end position="151"/>
    </location>
    <ligand>
        <name>GTP</name>
        <dbReference type="ChEBI" id="CHEBI:37565"/>
    </ligand>
</feature>
<feature type="binding site" evidence="1">
    <location>
        <begin position="185"/>
        <end position="188"/>
    </location>
    <ligand>
        <name>GTP</name>
        <dbReference type="ChEBI" id="CHEBI:37565"/>
    </ligand>
</feature>
<dbReference type="EMBL" id="CP000572">
    <property type="protein sequence ID" value="ABN91592.1"/>
    <property type="molecule type" value="Genomic_DNA"/>
</dbReference>
<dbReference type="SMR" id="A3P082"/>
<dbReference type="KEGG" id="bpl:BURPS1106A_3773"/>
<dbReference type="HOGENOM" id="CLU_033732_1_1_4"/>
<dbReference type="Proteomes" id="UP000006738">
    <property type="component" value="Chromosome I"/>
</dbReference>
<dbReference type="GO" id="GO:0005829">
    <property type="term" value="C:cytosol"/>
    <property type="evidence" value="ECO:0007669"/>
    <property type="project" value="TreeGrafter"/>
</dbReference>
<dbReference type="GO" id="GO:0005525">
    <property type="term" value="F:GTP binding"/>
    <property type="evidence" value="ECO:0007669"/>
    <property type="project" value="UniProtKB-UniRule"/>
</dbReference>
<dbReference type="GO" id="GO:0046872">
    <property type="term" value="F:metal ion binding"/>
    <property type="evidence" value="ECO:0007669"/>
    <property type="project" value="UniProtKB-KW"/>
</dbReference>
<dbReference type="GO" id="GO:0000917">
    <property type="term" value="P:division septum assembly"/>
    <property type="evidence" value="ECO:0007669"/>
    <property type="project" value="UniProtKB-KW"/>
</dbReference>
<dbReference type="CDD" id="cd01876">
    <property type="entry name" value="YihA_EngB"/>
    <property type="match status" value="1"/>
</dbReference>
<dbReference type="FunFam" id="3.40.50.300:FF:000098">
    <property type="entry name" value="Probable GTP-binding protein EngB"/>
    <property type="match status" value="1"/>
</dbReference>
<dbReference type="Gene3D" id="3.40.50.300">
    <property type="entry name" value="P-loop containing nucleotide triphosphate hydrolases"/>
    <property type="match status" value="1"/>
</dbReference>
<dbReference type="HAMAP" id="MF_00321">
    <property type="entry name" value="GTPase_EngB"/>
    <property type="match status" value="1"/>
</dbReference>
<dbReference type="InterPro" id="IPR030393">
    <property type="entry name" value="G_ENGB_dom"/>
</dbReference>
<dbReference type="InterPro" id="IPR006073">
    <property type="entry name" value="GTP-bd"/>
</dbReference>
<dbReference type="InterPro" id="IPR019987">
    <property type="entry name" value="GTP-bd_ribosome_bio_YsxC"/>
</dbReference>
<dbReference type="InterPro" id="IPR027417">
    <property type="entry name" value="P-loop_NTPase"/>
</dbReference>
<dbReference type="NCBIfam" id="TIGR03598">
    <property type="entry name" value="GTPase_YsxC"/>
    <property type="match status" value="1"/>
</dbReference>
<dbReference type="PANTHER" id="PTHR11649:SF13">
    <property type="entry name" value="ENGB-TYPE G DOMAIN-CONTAINING PROTEIN"/>
    <property type="match status" value="1"/>
</dbReference>
<dbReference type="PANTHER" id="PTHR11649">
    <property type="entry name" value="MSS1/TRME-RELATED GTP-BINDING PROTEIN"/>
    <property type="match status" value="1"/>
</dbReference>
<dbReference type="Pfam" id="PF01926">
    <property type="entry name" value="MMR_HSR1"/>
    <property type="match status" value="1"/>
</dbReference>
<dbReference type="SUPFAM" id="SSF52540">
    <property type="entry name" value="P-loop containing nucleoside triphosphate hydrolases"/>
    <property type="match status" value="1"/>
</dbReference>
<dbReference type="PROSITE" id="PS51706">
    <property type="entry name" value="G_ENGB"/>
    <property type="match status" value="1"/>
</dbReference>
<name>ENGB_BURP0</name>
<sequence length="219" mass="24198">MAFLLHQARFFTTVNHLRDLPPTVQPEVAFAGRSNAGKSTAINVLCNQKRLAFASKTPGRTQHINYFSVGPAAEPVAHLVDLPGYGYAEVPGAAKAHWEQLLSSYLQTRPQLCGMILMMDARRPLTELDRRMIEWFAPTGKPIHSLLTKCDKLTRQESINALRATQKSLDAYRDAGYAGKLTVQLFSALKRTGLDDAHALIESWVRPAAADEDRAAVAE</sequence>
<reference key="1">
    <citation type="journal article" date="2010" name="Genome Biol. Evol.">
        <title>Continuing evolution of Burkholderia mallei through genome reduction and large-scale rearrangements.</title>
        <authorList>
            <person name="Losada L."/>
            <person name="Ronning C.M."/>
            <person name="DeShazer D."/>
            <person name="Woods D."/>
            <person name="Fedorova N."/>
            <person name="Kim H.S."/>
            <person name="Shabalina S.A."/>
            <person name="Pearson T.R."/>
            <person name="Brinkac L."/>
            <person name="Tan P."/>
            <person name="Nandi T."/>
            <person name="Crabtree J."/>
            <person name="Badger J."/>
            <person name="Beckstrom-Sternberg S."/>
            <person name="Saqib M."/>
            <person name="Schutzer S.E."/>
            <person name="Keim P."/>
            <person name="Nierman W.C."/>
        </authorList>
    </citation>
    <scope>NUCLEOTIDE SEQUENCE [LARGE SCALE GENOMIC DNA]</scope>
    <source>
        <strain>1106a</strain>
    </source>
</reference>
<accession>A3P082</accession>
<evidence type="ECO:0000255" key="1">
    <source>
        <dbReference type="HAMAP-Rule" id="MF_00321"/>
    </source>
</evidence>